<organism>
    <name type="scientific">Mus musculus</name>
    <name type="common">Mouse</name>
    <dbReference type="NCBI Taxonomy" id="10090"/>
    <lineage>
        <taxon>Eukaryota</taxon>
        <taxon>Metazoa</taxon>
        <taxon>Chordata</taxon>
        <taxon>Craniata</taxon>
        <taxon>Vertebrata</taxon>
        <taxon>Euteleostomi</taxon>
        <taxon>Mammalia</taxon>
        <taxon>Eutheria</taxon>
        <taxon>Euarchontoglires</taxon>
        <taxon>Glires</taxon>
        <taxon>Rodentia</taxon>
        <taxon>Myomorpha</taxon>
        <taxon>Muroidea</taxon>
        <taxon>Muridae</taxon>
        <taxon>Murinae</taxon>
        <taxon>Mus</taxon>
        <taxon>Mus</taxon>
    </lineage>
</organism>
<gene>
    <name type="primary">Plxnb3</name>
    <name type="synonym">Kiaa1206</name>
    <name type="synonym">Plxn6</name>
</gene>
<evidence type="ECO:0000250" key="1"/>
<evidence type="ECO:0000255" key="2"/>
<evidence type="ECO:0000255" key="3">
    <source>
        <dbReference type="PROSITE-ProRule" id="PRU00352"/>
    </source>
</evidence>
<evidence type="ECO:0000256" key="4">
    <source>
        <dbReference type="SAM" id="MobiDB-lite"/>
    </source>
</evidence>
<evidence type="ECO:0000269" key="5">
    <source>
    </source>
</evidence>
<evidence type="ECO:0000269" key="6">
    <source>
    </source>
</evidence>
<evidence type="ECO:0000269" key="7">
    <source>
    </source>
</evidence>
<evidence type="ECO:0000269" key="8">
    <source>
    </source>
</evidence>
<evidence type="ECO:0000269" key="9">
    <source>
    </source>
</evidence>
<evidence type="ECO:0000269" key="10">
    <source>
    </source>
</evidence>
<evidence type="ECO:0000305" key="11"/>
<feature type="signal peptide" evidence="2">
    <location>
        <begin position="1"/>
        <end position="36"/>
    </location>
</feature>
<feature type="chain" id="PRO_0000024675" description="Plexin-B3">
    <location>
        <begin position="37"/>
        <end position="1902"/>
    </location>
</feature>
<feature type="topological domain" description="Extracellular" evidence="2">
    <location>
        <begin position="37"/>
        <end position="1245"/>
    </location>
</feature>
<feature type="transmembrane region" description="Helical" evidence="2">
    <location>
        <begin position="1246"/>
        <end position="1266"/>
    </location>
</feature>
<feature type="topological domain" description="Cytoplasmic" evidence="2">
    <location>
        <begin position="1267"/>
        <end position="1902"/>
    </location>
</feature>
<feature type="domain" description="Sema" evidence="3">
    <location>
        <begin position="37"/>
        <end position="461"/>
    </location>
</feature>
<feature type="domain" description="PSI 1">
    <location>
        <begin position="463"/>
        <end position="515"/>
    </location>
</feature>
<feature type="domain" description="PSI 2">
    <location>
        <begin position="609"/>
        <end position="671"/>
    </location>
</feature>
<feature type="domain" description="PSI 3">
    <location>
        <begin position="776"/>
        <end position="822"/>
    </location>
</feature>
<feature type="domain" description="IPT/TIG 1">
    <location>
        <begin position="823"/>
        <end position="914"/>
    </location>
</feature>
<feature type="domain" description="IPT/TIG 2">
    <location>
        <begin position="915"/>
        <end position="1001"/>
    </location>
</feature>
<feature type="domain" description="IPT/TIG 3">
    <location>
        <begin position="1003"/>
        <end position="1134"/>
    </location>
</feature>
<feature type="domain" description="IPT/TIG 4">
    <location>
        <begin position="1154"/>
        <end position="1221"/>
    </location>
</feature>
<feature type="region of interest" description="Disordered" evidence="4">
    <location>
        <begin position="353"/>
        <end position="372"/>
    </location>
</feature>
<feature type="glycosylation site" description="N-linked (GlcNAc...) asparagine" evidence="2">
    <location>
        <position position="41"/>
    </location>
</feature>
<feature type="glycosylation site" description="N-linked (GlcNAc...) asparagine" evidence="2">
    <location>
        <position position="221"/>
    </location>
</feature>
<feature type="glycosylation site" description="N-linked (GlcNAc...) asparagine" evidence="2">
    <location>
        <position position="416"/>
    </location>
</feature>
<feature type="glycosylation site" description="N-linked (GlcNAc...) asparagine" evidence="2">
    <location>
        <position position="469"/>
    </location>
</feature>
<feature type="glycosylation site" description="N-linked (GlcNAc...) asparagine" evidence="2">
    <location>
        <position position="791"/>
    </location>
</feature>
<feature type="glycosylation site" description="N-linked (GlcNAc...) asparagine" evidence="2">
    <location>
        <position position="889"/>
    </location>
</feature>
<feature type="glycosylation site" description="N-linked (GlcNAc...) asparagine" evidence="2">
    <location>
        <position position="910"/>
    </location>
</feature>
<feature type="glycosylation site" description="N-linked (GlcNAc...) asparagine" evidence="2">
    <location>
        <position position="946"/>
    </location>
</feature>
<feature type="glycosylation site" description="N-linked (GlcNAc...) asparagine" evidence="2">
    <location>
        <position position="1090"/>
    </location>
</feature>
<feature type="glycosylation site" description="N-linked (GlcNAc...) asparagine" evidence="2">
    <location>
        <position position="1207"/>
    </location>
</feature>
<feature type="disulfide bond" evidence="3">
    <location>
        <begin position="88"/>
        <end position="97"/>
    </location>
</feature>
<feature type="disulfide bond" evidence="3">
    <location>
        <begin position="122"/>
        <end position="130"/>
    </location>
</feature>
<feature type="disulfide bond" evidence="3">
    <location>
        <begin position="257"/>
        <end position="360"/>
    </location>
</feature>
<feature type="disulfide bond" evidence="3">
    <location>
        <begin position="273"/>
        <end position="305"/>
    </location>
</feature>
<feature type="disulfide bond" evidence="3">
    <location>
        <begin position="323"/>
        <end position="347"/>
    </location>
</feature>
<feature type="disulfide bond" evidence="3">
    <location>
        <begin position="464"/>
        <end position="481"/>
    </location>
</feature>
<feature type="disulfide bond" evidence="3">
    <location>
        <begin position="470"/>
        <end position="514"/>
    </location>
</feature>
<feature type="disulfide bond" evidence="3">
    <location>
        <begin position="473"/>
        <end position="490"/>
    </location>
</feature>
<feature type="disulfide bond" evidence="3">
    <location>
        <begin position="484"/>
        <end position="496"/>
    </location>
</feature>
<feature type="disulfide bond" evidence="3">
    <location>
        <begin position="551"/>
        <end position="569"/>
    </location>
</feature>
<feature type="sequence conflict" description="In Ref. 4; BAC65749." evidence="11" ref="4">
    <original>P</original>
    <variation>V</variation>
    <location>
        <position position="352"/>
    </location>
</feature>
<feature type="sequence conflict" description="In Ref. 4; BAC65749." evidence="11" ref="4">
    <location>
        <begin position="1566"/>
        <end position="1601"/>
    </location>
</feature>
<dbReference type="EMBL" id="AF133093">
    <property type="status" value="NOT_ANNOTATED_CDS"/>
    <property type="molecule type" value="Genomic_DNA"/>
</dbReference>
<dbReference type="EMBL" id="AL672094">
    <property type="status" value="NOT_ANNOTATED_CDS"/>
    <property type="molecule type" value="Genomic_DNA"/>
</dbReference>
<dbReference type="EMBL" id="AK122467">
    <property type="protein sequence ID" value="BAC65749.2"/>
    <property type="status" value="ALT_SEQ"/>
    <property type="molecule type" value="Transcribed_RNA"/>
</dbReference>
<dbReference type="CCDS" id="CCDS41013.1"/>
<dbReference type="RefSeq" id="NP_062533.2">
    <property type="nucleotide sequence ID" value="NM_019587.2"/>
</dbReference>
<dbReference type="RefSeq" id="XP_006527842.1">
    <property type="nucleotide sequence ID" value="XM_006527779.1"/>
</dbReference>
<dbReference type="RefSeq" id="XP_006527843.1">
    <property type="nucleotide sequence ID" value="XM_006527780.2"/>
</dbReference>
<dbReference type="SMR" id="Q9QY40"/>
<dbReference type="BioGRID" id="228284">
    <property type="interactions" value="6"/>
</dbReference>
<dbReference type="FunCoup" id="Q9QY40">
    <property type="interactions" value="16"/>
</dbReference>
<dbReference type="IntAct" id="Q9QY40">
    <property type="interactions" value="2"/>
</dbReference>
<dbReference type="MINT" id="Q9QY40"/>
<dbReference type="STRING" id="10090.ENSMUSP00000002079"/>
<dbReference type="GlyConnect" id="2595">
    <property type="glycosylation" value="1 N-Linked glycan (1 site)"/>
</dbReference>
<dbReference type="GlyCosmos" id="Q9QY40">
    <property type="glycosylation" value="10 sites, 1 glycan"/>
</dbReference>
<dbReference type="GlyGen" id="Q9QY40">
    <property type="glycosylation" value="14 sites, 6 N-linked glycans (5 sites), 1 O-linked glycan (1 site)"/>
</dbReference>
<dbReference type="iPTMnet" id="Q9QY40"/>
<dbReference type="PhosphoSitePlus" id="Q9QY40"/>
<dbReference type="jPOST" id="Q9QY40"/>
<dbReference type="PaxDb" id="10090-ENSMUSP00000002079"/>
<dbReference type="PeptideAtlas" id="Q9QY40"/>
<dbReference type="ProteomicsDB" id="289844"/>
<dbReference type="Pumba" id="Q9QY40"/>
<dbReference type="Antibodypedia" id="369">
    <property type="antibodies" value="97 antibodies from 15 providers"/>
</dbReference>
<dbReference type="Ensembl" id="ENSMUST00000002079.7">
    <property type="protein sequence ID" value="ENSMUSP00000002079.7"/>
    <property type="gene ID" value="ENSMUSG00000031385.15"/>
</dbReference>
<dbReference type="GeneID" id="140571"/>
<dbReference type="KEGG" id="mmu:140571"/>
<dbReference type="UCSC" id="uc009tmn.2">
    <property type="organism name" value="mouse"/>
</dbReference>
<dbReference type="AGR" id="MGI:2154240"/>
<dbReference type="CTD" id="5365"/>
<dbReference type="MGI" id="MGI:2154240">
    <property type="gene designation" value="Plxnb3"/>
</dbReference>
<dbReference type="VEuPathDB" id="HostDB:ENSMUSG00000031385"/>
<dbReference type="eggNOG" id="KOG3610">
    <property type="taxonomic scope" value="Eukaryota"/>
</dbReference>
<dbReference type="GeneTree" id="ENSGT01020000230394"/>
<dbReference type="HOGENOM" id="CLU_001436_1_1_1"/>
<dbReference type="InParanoid" id="Q9QY40"/>
<dbReference type="OMA" id="YCWLELP"/>
<dbReference type="OrthoDB" id="125363at2759"/>
<dbReference type="PhylomeDB" id="Q9QY40"/>
<dbReference type="TreeFam" id="TF312962"/>
<dbReference type="Reactome" id="R-MMU-416700">
    <property type="pathway name" value="Other semaphorin interactions"/>
</dbReference>
<dbReference type="BioGRID-ORCS" id="140571">
    <property type="hits" value="0 hits in 78 CRISPR screens"/>
</dbReference>
<dbReference type="ChiTaRS" id="Plxnb3">
    <property type="organism name" value="mouse"/>
</dbReference>
<dbReference type="PRO" id="PR:Q9QY40"/>
<dbReference type="Proteomes" id="UP000000589">
    <property type="component" value="Chromosome X"/>
</dbReference>
<dbReference type="RNAct" id="Q9QY40">
    <property type="molecule type" value="protein"/>
</dbReference>
<dbReference type="Bgee" id="ENSMUSG00000031385">
    <property type="expression patterns" value="Expressed in cerebellar nuclear complex and 165 other cell types or tissues"/>
</dbReference>
<dbReference type="GO" id="GO:0009986">
    <property type="term" value="C:cell surface"/>
    <property type="evidence" value="ECO:0007669"/>
    <property type="project" value="Ensembl"/>
</dbReference>
<dbReference type="GO" id="GO:0005886">
    <property type="term" value="C:plasma membrane"/>
    <property type="evidence" value="ECO:0007669"/>
    <property type="project" value="UniProtKB-SubCell"/>
</dbReference>
<dbReference type="GO" id="GO:0098632">
    <property type="term" value="F:cell-cell adhesion mediator activity"/>
    <property type="evidence" value="ECO:0007669"/>
    <property type="project" value="Ensembl"/>
</dbReference>
<dbReference type="GO" id="GO:0019904">
    <property type="term" value="F:protein domain specific binding"/>
    <property type="evidence" value="ECO:0000250"/>
    <property type="project" value="UniProtKB"/>
</dbReference>
<dbReference type="GO" id="GO:0051022">
    <property type="term" value="F:Rho GDP-dissociation inhibitor binding"/>
    <property type="evidence" value="ECO:0000353"/>
    <property type="project" value="UniProtKB"/>
</dbReference>
<dbReference type="GO" id="GO:0017154">
    <property type="term" value="F:semaphorin receptor activity"/>
    <property type="evidence" value="ECO:0000250"/>
    <property type="project" value="UniProtKB"/>
</dbReference>
<dbReference type="GO" id="GO:0060326">
    <property type="term" value="P:cell chemotaxis"/>
    <property type="evidence" value="ECO:0000250"/>
    <property type="project" value="UniProtKB"/>
</dbReference>
<dbReference type="GO" id="GO:0007156">
    <property type="term" value="P:homophilic cell adhesion via plasma membrane adhesion molecules"/>
    <property type="evidence" value="ECO:0007669"/>
    <property type="project" value="Ensembl"/>
</dbReference>
<dbReference type="GO" id="GO:0007162">
    <property type="term" value="P:negative regulation of cell adhesion"/>
    <property type="evidence" value="ECO:0000250"/>
    <property type="project" value="UniProtKB"/>
</dbReference>
<dbReference type="GO" id="GO:0030336">
    <property type="term" value="P:negative regulation of cell migration"/>
    <property type="evidence" value="ECO:0000250"/>
    <property type="project" value="UniProtKB"/>
</dbReference>
<dbReference type="GO" id="GO:0034260">
    <property type="term" value="P:negative regulation of GTPase activity"/>
    <property type="evidence" value="ECO:0000250"/>
    <property type="project" value="UniProtKB"/>
</dbReference>
<dbReference type="GO" id="GO:0010593">
    <property type="term" value="P:negative regulation of lamellipodium assembly"/>
    <property type="evidence" value="ECO:0000250"/>
    <property type="project" value="UniProtKB"/>
</dbReference>
<dbReference type="GO" id="GO:0007399">
    <property type="term" value="P:nervous system development"/>
    <property type="evidence" value="ECO:0007669"/>
    <property type="project" value="UniProtKB-KW"/>
</dbReference>
<dbReference type="GO" id="GO:0050918">
    <property type="term" value="P:positive chemotaxis"/>
    <property type="evidence" value="ECO:0000250"/>
    <property type="project" value="UniProtKB"/>
</dbReference>
<dbReference type="GO" id="GO:0001938">
    <property type="term" value="P:positive regulation of endothelial cell proliferation"/>
    <property type="evidence" value="ECO:0007669"/>
    <property type="project" value="Ensembl"/>
</dbReference>
<dbReference type="GO" id="GO:0010976">
    <property type="term" value="P:positive regulation of neuron projection development"/>
    <property type="evidence" value="ECO:0007669"/>
    <property type="project" value="Ensembl"/>
</dbReference>
<dbReference type="GO" id="GO:0071526">
    <property type="term" value="P:semaphorin-plexin signaling pathway"/>
    <property type="evidence" value="ECO:0000250"/>
    <property type="project" value="UniProtKB"/>
</dbReference>
<dbReference type="CDD" id="cd00603">
    <property type="entry name" value="IPT_PCSR"/>
    <property type="match status" value="1"/>
</dbReference>
<dbReference type="CDD" id="cd01180">
    <property type="entry name" value="IPT_plexin_repeat1"/>
    <property type="match status" value="1"/>
</dbReference>
<dbReference type="CDD" id="cd01179">
    <property type="entry name" value="IPT_plexin_repeat2"/>
    <property type="match status" value="1"/>
</dbReference>
<dbReference type="CDD" id="cd12791">
    <property type="entry name" value="RasGAP_plexin_B3"/>
    <property type="match status" value="1"/>
</dbReference>
<dbReference type="CDD" id="cd11277">
    <property type="entry name" value="Sema_plexin_B3"/>
    <property type="match status" value="1"/>
</dbReference>
<dbReference type="FunFam" id="2.60.40.10:FF:000320">
    <property type="entry name" value="Plexin A1"/>
    <property type="match status" value="1"/>
</dbReference>
<dbReference type="FunFam" id="1.10.506.10:FF:000010">
    <property type="entry name" value="Plexin B1"/>
    <property type="match status" value="1"/>
</dbReference>
<dbReference type="FunFam" id="1.10.506.10:FF:000012">
    <property type="entry name" value="Plexin B1"/>
    <property type="match status" value="1"/>
</dbReference>
<dbReference type="FunFam" id="2.60.40.10:FF:000203">
    <property type="entry name" value="Plexin B2"/>
    <property type="match status" value="1"/>
</dbReference>
<dbReference type="FunFam" id="2.60.40.10:FF:000892">
    <property type="entry name" value="Plexin B3"/>
    <property type="match status" value="1"/>
</dbReference>
<dbReference type="FunFam" id="2.60.40.10:FF:000970">
    <property type="entry name" value="Plexin B3"/>
    <property type="match status" value="1"/>
</dbReference>
<dbReference type="FunFam" id="3.10.20.90:FF:000209">
    <property type="entry name" value="Plexin B3"/>
    <property type="match status" value="1"/>
</dbReference>
<dbReference type="FunFam" id="2.130.10.10:FF:000270">
    <property type="entry name" value="plexin-B3 isoform X3"/>
    <property type="match status" value="1"/>
</dbReference>
<dbReference type="Gene3D" id="1.10.506.10">
    <property type="entry name" value="GTPase Activation - p120gap, domain 1"/>
    <property type="match status" value="2"/>
</dbReference>
<dbReference type="Gene3D" id="2.60.40.10">
    <property type="entry name" value="Immunoglobulins"/>
    <property type="match status" value="4"/>
</dbReference>
<dbReference type="Gene3D" id="3.10.20.90">
    <property type="entry name" value="Phosphatidylinositol 3-kinase Catalytic Subunit, Chain A, domain 1"/>
    <property type="match status" value="1"/>
</dbReference>
<dbReference type="Gene3D" id="2.130.10.10">
    <property type="entry name" value="YVTN repeat-like/Quinoprotein amine dehydrogenase"/>
    <property type="match status" value="1"/>
</dbReference>
<dbReference type="InterPro" id="IPR013783">
    <property type="entry name" value="Ig-like_fold"/>
</dbReference>
<dbReference type="InterPro" id="IPR014756">
    <property type="entry name" value="Ig_E-set"/>
</dbReference>
<dbReference type="InterPro" id="IPR002909">
    <property type="entry name" value="IPT_dom"/>
</dbReference>
<dbReference type="InterPro" id="IPR031148">
    <property type="entry name" value="Plexin"/>
</dbReference>
<dbReference type="InterPro" id="IPR013548">
    <property type="entry name" value="Plexin_cytoplasmic_RasGAP_dom"/>
</dbReference>
<dbReference type="InterPro" id="IPR046800">
    <property type="entry name" value="Plexin_RBD"/>
</dbReference>
<dbReference type="InterPro" id="IPR002165">
    <property type="entry name" value="Plexin_repeat"/>
</dbReference>
<dbReference type="InterPro" id="IPR016201">
    <property type="entry name" value="PSI"/>
</dbReference>
<dbReference type="InterPro" id="IPR008936">
    <property type="entry name" value="Rho_GTPase_activation_prot"/>
</dbReference>
<dbReference type="InterPro" id="IPR001627">
    <property type="entry name" value="Semap_dom"/>
</dbReference>
<dbReference type="InterPro" id="IPR036352">
    <property type="entry name" value="Semap_dom_sf"/>
</dbReference>
<dbReference type="InterPro" id="IPR041019">
    <property type="entry name" value="TIG1_plexin"/>
</dbReference>
<dbReference type="InterPro" id="IPR041362">
    <property type="entry name" value="TIG2_plexin"/>
</dbReference>
<dbReference type="InterPro" id="IPR015943">
    <property type="entry name" value="WD40/YVTN_repeat-like_dom_sf"/>
</dbReference>
<dbReference type="PANTHER" id="PTHR22625">
    <property type="entry name" value="PLEXIN"/>
    <property type="match status" value="1"/>
</dbReference>
<dbReference type="PANTHER" id="PTHR22625:SF33">
    <property type="entry name" value="PLEXIN-B3"/>
    <property type="match status" value="1"/>
</dbReference>
<dbReference type="Pfam" id="PF08337">
    <property type="entry name" value="Plexin_cytopl"/>
    <property type="match status" value="1"/>
</dbReference>
<dbReference type="Pfam" id="PF20170">
    <property type="entry name" value="Plexin_RBD"/>
    <property type="match status" value="1"/>
</dbReference>
<dbReference type="Pfam" id="PF01437">
    <property type="entry name" value="PSI"/>
    <property type="match status" value="1"/>
</dbReference>
<dbReference type="Pfam" id="PF24317">
    <property type="entry name" value="PSI_Plexin-B"/>
    <property type="match status" value="1"/>
</dbReference>
<dbReference type="Pfam" id="PF24479">
    <property type="entry name" value="PSI_PlexinA-B"/>
    <property type="match status" value="1"/>
</dbReference>
<dbReference type="Pfam" id="PF01403">
    <property type="entry name" value="Sema"/>
    <property type="match status" value="1"/>
</dbReference>
<dbReference type="Pfam" id="PF01833">
    <property type="entry name" value="TIG"/>
    <property type="match status" value="3"/>
</dbReference>
<dbReference type="Pfam" id="PF18020">
    <property type="entry name" value="TIG_2"/>
    <property type="match status" value="1"/>
</dbReference>
<dbReference type="Pfam" id="PF17960">
    <property type="entry name" value="TIG_plexin"/>
    <property type="match status" value="1"/>
</dbReference>
<dbReference type="SMART" id="SM00429">
    <property type="entry name" value="IPT"/>
    <property type="match status" value="3"/>
</dbReference>
<dbReference type="SMART" id="SM00423">
    <property type="entry name" value="PSI"/>
    <property type="match status" value="3"/>
</dbReference>
<dbReference type="SMART" id="SM00630">
    <property type="entry name" value="Sema"/>
    <property type="match status" value="1"/>
</dbReference>
<dbReference type="SUPFAM" id="SSF81296">
    <property type="entry name" value="E set domains"/>
    <property type="match status" value="3"/>
</dbReference>
<dbReference type="SUPFAM" id="SSF48350">
    <property type="entry name" value="GTPase activation domain, GAP"/>
    <property type="match status" value="1"/>
</dbReference>
<dbReference type="SUPFAM" id="SSF103575">
    <property type="entry name" value="Plexin repeat"/>
    <property type="match status" value="1"/>
</dbReference>
<dbReference type="SUPFAM" id="SSF101912">
    <property type="entry name" value="Sema domain"/>
    <property type="match status" value="1"/>
</dbReference>
<dbReference type="PROSITE" id="PS51004">
    <property type="entry name" value="SEMA"/>
    <property type="match status" value="1"/>
</dbReference>
<reference key="1">
    <citation type="submission" date="1999-03" db="EMBL/GenBank/DDBJ databases">
        <title>Comparative sequence analysis of the mouse L1cam locus and the corresponding region of human Xq28.</title>
        <authorList>
            <person name="Platzer M."/>
            <person name="Brenner V."/>
            <person name="Reichwald K."/>
            <person name="Wiehe T."/>
            <person name="Oksche A."/>
            <person name="Rosenthal A."/>
        </authorList>
    </citation>
    <scope>NUCLEOTIDE SEQUENCE [GENOMIC DNA]</scope>
</reference>
<reference key="2">
    <citation type="journal article" date="2009" name="PLoS Biol.">
        <title>Lineage-specific biology revealed by a finished genome assembly of the mouse.</title>
        <authorList>
            <person name="Church D.M."/>
            <person name="Goodstadt L."/>
            <person name="Hillier L.W."/>
            <person name="Zody M.C."/>
            <person name="Goldstein S."/>
            <person name="She X."/>
            <person name="Bult C.J."/>
            <person name="Agarwala R."/>
            <person name="Cherry J.L."/>
            <person name="DiCuccio M."/>
            <person name="Hlavina W."/>
            <person name="Kapustin Y."/>
            <person name="Meric P."/>
            <person name="Maglott D."/>
            <person name="Birtle Z."/>
            <person name="Marques A.C."/>
            <person name="Graves T."/>
            <person name="Zhou S."/>
            <person name="Teague B."/>
            <person name="Potamousis K."/>
            <person name="Churas C."/>
            <person name="Place M."/>
            <person name="Herschleb J."/>
            <person name="Runnheim R."/>
            <person name="Forrest D."/>
            <person name="Amos-Landgraf J."/>
            <person name="Schwartz D.C."/>
            <person name="Cheng Z."/>
            <person name="Lindblad-Toh K."/>
            <person name="Eichler E.E."/>
            <person name="Ponting C.P."/>
        </authorList>
    </citation>
    <scope>NUCLEOTIDE SEQUENCE [LARGE SCALE GENOMIC DNA]</scope>
    <source>
        <strain>C57BL/6J</strain>
    </source>
</reference>
<reference key="3">
    <citation type="journal article" date="2003" name="DNA Res.">
        <title>Prediction of the coding sequences of mouse homologues of KIAA gene: II. The complete nucleotide sequences of 400 mouse KIAA-homologous cDNAs identified by screening of terminal sequences of cDNA clones randomly sampled from size-fractionated libraries.</title>
        <authorList>
            <person name="Okazaki N."/>
            <person name="Kikuno R."/>
            <person name="Ohara R."/>
            <person name="Inamoto S."/>
            <person name="Aizawa H."/>
            <person name="Yuasa S."/>
            <person name="Nakajima D."/>
            <person name="Nagase T."/>
            <person name="Ohara O."/>
            <person name="Koga H."/>
        </authorList>
    </citation>
    <scope>NUCLEOTIDE SEQUENCE [LARGE SCALE MRNA] OF 352-1902</scope>
    <source>
        <tissue>Brain</tissue>
    </source>
</reference>
<reference key="4">
    <citation type="submission" date="2003-08" db="EMBL/GenBank/DDBJ databases">
        <authorList>
            <person name="Okazaki N."/>
            <person name="Kikuno R."/>
            <person name="Nagase T."/>
            <person name="Ohara O."/>
            <person name="Koga H."/>
        </authorList>
    </citation>
    <scope>SEQUENCE REVISION</scope>
</reference>
<reference key="5">
    <citation type="journal article" date="2004" name="EMBO Rep.">
        <title>Plexin-B3 is a functional receptor for semaphorin 5A.</title>
        <authorList>
            <person name="Artigiani S."/>
            <person name="Conrotto P."/>
            <person name="Fazzari P."/>
            <person name="Gilestro G.F."/>
            <person name="Barberis D."/>
            <person name="Giordano S."/>
            <person name="Comoglio P.M."/>
            <person name="Tamagnone L."/>
        </authorList>
    </citation>
    <scope>FUNCTION</scope>
    <scope>TISSUE SPECIFICITY</scope>
</reference>
<reference key="6">
    <citation type="journal article" date="2004" name="Eur. J. Neurosci.">
        <title>Plexin-B family members demonstrate non-redundant expression patterns in the developing mouse nervous system: an anatomical basis for morphogenetic effects of Sema4D during development.</title>
        <authorList>
            <person name="Worzfeld T."/>
            <person name="Puschel A.W."/>
            <person name="Offermanns S."/>
            <person name="Kuner R."/>
        </authorList>
    </citation>
    <scope>DEVELOPMENTAL STAGE</scope>
</reference>
<reference key="7">
    <citation type="journal article" date="2005" name="BMC Neurosci.">
        <title>Plexin B3 promotes neurite outgrowth, interacts homophilically, and interacts with Rin.</title>
        <authorList>
            <person name="Hartwig C."/>
            <person name="Veske A."/>
            <person name="Krejcova S."/>
            <person name="Rosenberger G."/>
            <person name="Finckh U."/>
        </authorList>
    </citation>
    <scope>TISSUE SPECIFICITY</scope>
</reference>
<reference key="8">
    <citation type="journal article" date="2009" name="Mol. Cell. Neurosci.">
        <title>Mice lacking Plexin-B3 display normal CNS morphology and behaviour.</title>
        <authorList>
            <person name="Worzfeld T."/>
            <person name="Rauch P."/>
            <person name="Karram K."/>
            <person name="Trotter J."/>
            <person name="Kuner R."/>
            <person name="Offermanns S."/>
        </authorList>
    </citation>
    <scope>DISRUPTION PHENOTYPE</scope>
</reference>
<reference key="9">
    <citation type="journal article" date="2010" name="J. Biol. Chem.">
        <title>Semaphorin 5A and plexin-B3 inhibit human glioma cell motility through RhoGDIalpha-mediated inactivation of Rac1 GTPase.</title>
        <authorList>
            <person name="Li X."/>
            <person name="Lee A.Y."/>
        </authorList>
    </citation>
    <scope>FUNCTION</scope>
    <scope>INTERACTION WITH ARHGDIA AND RAC1</scope>
</reference>
<reference key="10">
    <citation type="journal article" date="2012" name="Oncogene">
        <title>Semaphorin 5A and plexin-B3 regulate human glioma cell motility and morphology through Rac1 and the actin cytoskeleton.</title>
        <authorList>
            <person name="Li X."/>
            <person name="Law J.W."/>
            <person name="Lee A.Y."/>
        </authorList>
    </citation>
    <scope>INTERACTION WITH FSCN1</scope>
</reference>
<proteinExistence type="evidence at protein level"/>
<name>PLXB3_MOUSE</name>
<keyword id="KW-1003">Cell membrane</keyword>
<keyword id="KW-1015">Disulfide bond</keyword>
<keyword id="KW-0325">Glycoprotein</keyword>
<keyword id="KW-0472">Membrane</keyword>
<keyword id="KW-0524">Neurogenesis</keyword>
<keyword id="KW-0675">Receptor</keyword>
<keyword id="KW-1185">Reference proteome</keyword>
<keyword id="KW-0677">Repeat</keyword>
<keyword id="KW-0732">Signal</keyword>
<keyword id="KW-0812">Transmembrane</keyword>
<keyword id="KW-1133">Transmembrane helix</keyword>
<comment type="function">
    <text evidence="1 6 9">Receptor for SEMA5A that plays a role in axon guidance, invasive growth and cell migration. Stimulates neurite outgrowth and mediates Ca(2+)/Mg(2+)-dependent cell aggregation. In glioma cells, SEMA5A stimulation of PLXNB3 results in the disassembly of F-actin stress fibers, disruption of focal adhesions and cellular collapse as well as inhibition of cell migration and invasion through ARHGDIA-mediated inactivation of RAC1 (By similarity). Seem to be non-essential for normal development and function of the central nervous system.</text>
</comment>
<comment type="subunit">
    <text evidence="1 9 10">Binds MET and MST1R. Interacts with RIT2/RIN. May form homodimers (via Sema domain) (By similarity). Interacts (via cytoplasmic domain) with FSCN1, ARHGDIA and RAC1.</text>
</comment>
<comment type="interaction">
    <interactant intactId="EBI-6271317">
        <id>Q9QY40</id>
    </interactant>
    <interactant intactId="EBI-2308857">
        <id>Q61553</id>
        <label>Fscn1</label>
    </interactant>
    <organismsDiffer>false</organismsDiffer>
    <experiments>3</experiments>
</comment>
<comment type="subcellular location">
    <subcellularLocation>
        <location evidence="1">Cell membrane</location>
        <topology evidence="1">Single-pass type I membrane protein</topology>
    </subcellularLocation>
    <text evidence="1">Colocalizes with RIT2/RIN at the plasma membrane.</text>
</comment>
<comment type="tissue specificity">
    <text evidence="6 7">Expressed in brain (at protein level). In cerebellum, strongest expression detected in Purkinje and granular cells. Detected at very low levels in several fetal tissues, including dorsal root ganglia (DRG), heart, lung, optic bulb, brain and liver.</text>
</comment>
<comment type="developmental stage">
    <text evidence="5">In brain, detected first perinatally, with expression reaching maximal levels at postnatal day 9 (P9). In the developing nervous system, barely detectable until birth, and postnatally expressed in white matter tracks including the corpus callosum, external capsule, fimbria hippocampi and corticospinal tracts. In spinal cord, not detected until birth, and postnatally expressed in spinal white matter. In cerebellum, expressed only in cerebellar white matter cells, with expression detected first shortly after birth in the cerebellar peduncle and increasing progressively in the white matter tracts of the cerebellar lobes until P10.</text>
</comment>
<comment type="disruption phenotype">
    <text evidence="8">Mutant mice are viable and fertile and display no obvious morphological abnormalities in the brain or spinal cord.</text>
</comment>
<comment type="similarity">
    <text evidence="11">Belongs to the plexin family.</text>
</comment>
<comment type="sequence caution" evidence="11">
    <conflict type="erroneous gene model prediction">
        <sequence resource="EMBL-CDS" id="BAC65749"/>
    </conflict>
    <text>Contains intronic sequences.</text>
</comment>
<accession>Q9QY40</accession>
<accession>A2AFF9</accession>
<accession>Q80TH8</accession>
<sequence>MLTDFLQAPVMAPWSPFSLHLLLLFLPLLPLTRVHRFSVPNTSFNHLVLAPDQGKLYVGAVNHLFQLSPELKMESVAVTGPVIDSPDCVPFRDLAECPQAQLTDNANQLLLVSSRTQELVACGQVKQGVCEKRRLGDVTQVLYQAEDPGDGQFVAANTLGVTTVGLVVPLPGRDLLLVARGLAGKLSAGVPPLTVRQLAGPQPFSSEGLGRLVVGDFSDYNNSYVGAFSDAHSAYFVFRRRGARAQTEYRSYVARVCLRDVNLYSYVEMPLTCHGQGLIQAAFLTPDTLLGAFSAGTSQAQAALCAFPLADLDRSMEQARRLCYTTGGQGPSGMEEATVEYGVTSRCVTLPPDSPESYPCGDEHTPSPIAGRQPLEAQPLLQLGQSISAVAALQTDGHTIAFLGDTQGQLHKVFLNSSHGQVYHSQQVGPPGSAISPDLLVDSNGDHLYVLTAQQVDRILVAACPQFPNCTTCLQARDPLCGWCILQGRCTRRGECGRAAQPNHWLWSYEDNHCPYIQSLLPAQHPRQEQGQIILSVPRLPTLAMDEYFHCAFGGYNSLAQVEEPHVVCTTPPQDQMPPNPPGSDHVTLPLALMFEDVVLTATTFSFYDCSAVQALEVAAPCRACVSSLWRCHWCPQSSHCIYGEHCPEGEKAVYSAQEVDILVRGPEACPQVEGLASPQLVPVGWESHVTLHIQNLHYFQGLPALYHCWLELPGKLQKLPASLEETSRDSGLIHCQAQQFYPSMSQWELPVPIYVTRGEIQRLDNAGDLHVTLYDCAMGHPDCSHCQAANGSLSCLWCGDGQPACRYGPLCPPGAVEQLCPIPSIDVIEPLTGPPEGGLAITILGSNLGQAFNDVRNAVTVAGQPCNPDPSLYRISARIVCVTSPAPNGTAGPVQVAIKSRPPGISTQNFTYQDPVLLSLNPQWGPQAGGTQLTIHGQYLQTGGNISVFVGDQPCPIQEPVCPEAIICHTMPQTEPGEAVVLIVFGHVERKLLTTPFRYTANPQLVEAEPSVSFRGGGRVIRVRGTGLDVVWQPLLSVWLEDEPKVKALGVQAQDANPRRSCGAPAADPQACIHLESGLLQCSTLCSVNSSSLLLCHSPAVPDGALPKRVFFALDNMQVDFASASGGQGFLYQPNPRLAPLSHEGITHPYHLKPGHVLDVEGEGLNLGISKEEVQVHIGDGECLVKTLTLTHLYCEPPPQAPQPTNGSGTLPQFVVQMGNLRLALGPVQYEAESMMSTFPVEAQLGLGMGAAVLIAAVLLLTLMYRHKSKKALRDYQKVLVQLENLETGVGDQCRKEFTDLMTEMTDLTSDLEASGIPFLDYRTYAERAFFPGHVGCPLQPGLEGLGEEGRSVTVRQGLTQLSNLLNSKLFLLTLIHTLEEQPSFSQRDRCHVASLLSLALHSKLEYLTDIMRTLLGDLAAHYVHKNPKLMLRRTETMVEKLLTNWLSICLYTFLKEVAGEPLYMLFRAIKYQVDKGPVDAVTGKAKRTLNDSHLLREDVEFQPLTLMALVGPEADRAAGNSGVHRVPARVLDTDTITQVKEKVLDQIYKGTPFSQRPSVHSLDLEWRSGLAGHLTLSDEDLTSVTQNHWKRLNTLQHYKVPDGATVVLIPQVHNGGTVSQSLGQTGCPSGENTPMLEDGEEGGVRLWHLVKATEEAEGAKVRRSSLRDRERERSRAKAIPEIYLTRLLSMKGTLQKFVDDTFQAILSMNRPVPIAVKYLFDFLDELAEKHGIEDPETLHIWKTNSLLLRFWVNVLKNPQLIFDVQVSDNEDAILAVIAQTFIDSCMVSEHKVGRDSPVNKLLYAREIPRYKQMVEKYYADIRQSSPASYQEMNSALAELSGNYSSAPHCLEALRELYNHIHRYYDQIISALEEDPVAQKMQLACRLQQVAALVEYKVTDL</sequence>
<protein>
    <recommendedName>
        <fullName>Plexin-B3</fullName>
    </recommendedName>
    <alternativeName>
        <fullName>Plexin-6</fullName>
    </alternativeName>
</protein>